<keyword id="KW-0028">Amino-acid biosynthesis</keyword>
<keyword id="KW-0057">Aromatic amino acid biosynthesis</keyword>
<keyword id="KW-0274">FAD</keyword>
<keyword id="KW-0285">Flavoprotein</keyword>
<keyword id="KW-0288">FMN</keyword>
<keyword id="KW-0456">Lyase</keyword>
<keyword id="KW-0521">NADP</keyword>
<name>AROC_ACIF5</name>
<comment type="function">
    <text evidence="1">Catalyzes the anti-1,4-elimination of the C-3 phosphate and the C-6 proR hydrogen from 5-enolpyruvylshikimate-3-phosphate (EPSP) to yield chorismate, which is the branch point compound that serves as the starting substrate for the three terminal pathways of aromatic amino acid biosynthesis. This reaction introduces a second double bond into the aromatic ring system.</text>
</comment>
<comment type="catalytic activity">
    <reaction evidence="1">
        <text>5-O-(1-carboxyvinyl)-3-phosphoshikimate = chorismate + phosphate</text>
        <dbReference type="Rhea" id="RHEA:21020"/>
        <dbReference type="ChEBI" id="CHEBI:29748"/>
        <dbReference type="ChEBI" id="CHEBI:43474"/>
        <dbReference type="ChEBI" id="CHEBI:57701"/>
        <dbReference type="EC" id="4.2.3.5"/>
    </reaction>
</comment>
<comment type="cofactor">
    <cofactor evidence="1">
        <name>FMNH2</name>
        <dbReference type="ChEBI" id="CHEBI:57618"/>
    </cofactor>
    <text evidence="1">Reduced FMN (FMNH(2)).</text>
</comment>
<comment type="pathway">
    <text evidence="1">Metabolic intermediate biosynthesis; chorismate biosynthesis; chorismate from D-erythrose 4-phosphate and phosphoenolpyruvate: step 7/7.</text>
</comment>
<comment type="subunit">
    <text evidence="1">Homotetramer.</text>
</comment>
<comment type="similarity">
    <text evidence="1">Belongs to the chorismate synthase family.</text>
</comment>
<protein>
    <recommendedName>
        <fullName evidence="1">Chorismate synthase</fullName>
        <shortName evidence="1">CS</shortName>
        <ecNumber evidence="1">4.2.3.5</ecNumber>
    </recommendedName>
    <alternativeName>
        <fullName evidence="1">5-enolpyruvylshikimate-3-phosphate phospholyase</fullName>
    </alternativeName>
</protein>
<evidence type="ECO:0000255" key="1">
    <source>
        <dbReference type="HAMAP-Rule" id="MF_00300"/>
    </source>
</evidence>
<proteinExistence type="inferred from homology"/>
<dbReference type="EC" id="4.2.3.5" evidence="1"/>
<dbReference type="EMBL" id="CP001132">
    <property type="protein sequence ID" value="ACH83862.1"/>
    <property type="molecule type" value="Genomic_DNA"/>
</dbReference>
<dbReference type="RefSeq" id="WP_009562239.1">
    <property type="nucleotide sequence ID" value="NC_011206.1"/>
</dbReference>
<dbReference type="SMR" id="B5EJT1"/>
<dbReference type="GeneID" id="65281123"/>
<dbReference type="KEGG" id="afe:Lferr_1640"/>
<dbReference type="eggNOG" id="COG0082">
    <property type="taxonomic scope" value="Bacteria"/>
</dbReference>
<dbReference type="HOGENOM" id="CLU_034547_0_2_6"/>
<dbReference type="UniPathway" id="UPA00053">
    <property type="reaction ID" value="UER00090"/>
</dbReference>
<dbReference type="GO" id="GO:0005829">
    <property type="term" value="C:cytosol"/>
    <property type="evidence" value="ECO:0007669"/>
    <property type="project" value="TreeGrafter"/>
</dbReference>
<dbReference type="GO" id="GO:0004107">
    <property type="term" value="F:chorismate synthase activity"/>
    <property type="evidence" value="ECO:0007669"/>
    <property type="project" value="UniProtKB-UniRule"/>
</dbReference>
<dbReference type="GO" id="GO:0010181">
    <property type="term" value="F:FMN binding"/>
    <property type="evidence" value="ECO:0007669"/>
    <property type="project" value="TreeGrafter"/>
</dbReference>
<dbReference type="GO" id="GO:0008652">
    <property type="term" value="P:amino acid biosynthetic process"/>
    <property type="evidence" value="ECO:0007669"/>
    <property type="project" value="UniProtKB-KW"/>
</dbReference>
<dbReference type="GO" id="GO:0009073">
    <property type="term" value="P:aromatic amino acid family biosynthetic process"/>
    <property type="evidence" value="ECO:0007669"/>
    <property type="project" value="UniProtKB-KW"/>
</dbReference>
<dbReference type="GO" id="GO:0009423">
    <property type="term" value="P:chorismate biosynthetic process"/>
    <property type="evidence" value="ECO:0007669"/>
    <property type="project" value="UniProtKB-UniRule"/>
</dbReference>
<dbReference type="CDD" id="cd07304">
    <property type="entry name" value="Chorismate_synthase"/>
    <property type="match status" value="1"/>
</dbReference>
<dbReference type="Gene3D" id="3.60.150.10">
    <property type="entry name" value="Chorismate synthase AroC"/>
    <property type="match status" value="1"/>
</dbReference>
<dbReference type="HAMAP" id="MF_00300">
    <property type="entry name" value="Chorismate_synth"/>
    <property type="match status" value="1"/>
</dbReference>
<dbReference type="InterPro" id="IPR000453">
    <property type="entry name" value="Chorismate_synth"/>
</dbReference>
<dbReference type="InterPro" id="IPR035904">
    <property type="entry name" value="Chorismate_synth_AroC_sf"/>
</dbReference>
<dbReference type="InterPro" id="IPR020541">
    <property type="entry name" value="Chorismate_synthase_CS"/>
</dbReference>
<dbReference type="NCBIfam" id="TIGR00033">
    <property type="entry name" value="aroC"/>
    <property type="match status" value="1"/>
</dbReference>
<dbReference type="NCBIfam" id="NF003793">
    <property type="entry name" value="PRK05382.1"/>
    <property type="match status" value="1"/>
</dbReference>
<dbReference type="PANTHER" id="PTHR21085">
    <property type="entry name" value="CHORISMATE SYNTHASE"/>
    <property type="match status" value="1"/>
</dbReference>
<dbReference type="PANTHER" id="PTHR21085:SF0">
    <property type="entry name" value="CHORISMATE SYNTHASE"/>
    <property type="match status" value="1"/>
</dbReference>
<dbReference type="Pfam" id="PF01264">
    <property type="entry name" value="Chorismate_synt"/>
    <property type="match status" value="1"/>
</dbReference>
<dbReference type="PIRSF" id="PIRSF001456">
    <property type="entry name" value="Chorismate_synth"/>
    <property type="match status" value="1"/>
</dbReference>
<dbReference type="SUPFAM" id="SSF103263">
    <property type="entry name" value="Chorismate synthase, AroC"/>
    <property type="match status" value="1"/>
</dbReference>
<dbReference type="PROSITE" id="PS00787">
    <property type="entry name" value="CHORISMATE_SYNTHASE_1"/>
    <property type="match status" value="1"/>
</dbReference>
<dbReference type="PROSITE" id="PS00788">
    <property type="entry name" value="CHORISMATE_SYNTHASE_2"/>
    <property type="match status" value="1"/>
</dbReference>
<dbReference type="PROSITE" id="PS00789">
    <property type="entry name" value="CHORISMATE_SYNTHASE_3"/>
    <property type="match status" value="1"/>
</dbReference>
<organism>
    <name type="scientific">Acidithiobacillus ferrooxidans (strain ATCC 53993 / BNL-5-31)</name>
    <name type="common">Leptospirillum ferrooxidans (ATCC 53993)</name>
    <dbReference type="NCBI Taxonomy" id="380394"/>
    <lineage>
        <taxon>Bacteria</taxon>
        <taxon>Pseudomonadati</taxon>
        <taxon>Pseudomonadota</taxon>
        <taxon>Acidithiobacillia</taxon>
        <taxon>Acidithiobacillales</taxon>
        <taxon>Acidithiobacillaceae</taxon>
        <taxon>Acidithiobacillus</taxon>
    </lineage>
</organism>
<accession>B5EJT1</accession>
<sequence length="363" mass="38913">MAGSSIGECFRVSTFGESHGPAIGCIVDGCPPGMTLSAADIQTELDRRRPGRSRHTTQRQEADQVEILSGVFEGLTTGTPIGLLIRNTDQRSQDYSKIKDLFRPGHADYTYLQKYGLRDYRGGGRSSARETAMRVAAGAIARKFLRERLGVNIQAWMAQMGPIHAEDFDAAEISHNDFFCPDAGAAIRMADFLDGLRKEGDSIGARVDARVSGMPVGLGEPVFDRLEADIAKAMMSINAVKAIAVGDGFAVVEQRGSYHGDAMAATGFQSNHAGGVLGGISSGQDLTLSVAIKPTSSIRIPRQSIDVHGRPAEVITTGRHDPCVGIRAVPIVEAMLALVIMDHWMRHRAQNADVQAPLPPIPA</sequence>
<feature type="chain" id="PRO_1000115321" description="Chorismate synthase">
    <location>
        <begin position="1"/>
        <end position="363"/>
    </location>
</feature>
<feature type="binding site" evidence="1">
    <location>
        <position position="48"/>
    </location>
    <ligand>
        <name>NADP(+)</name>
        <dbReference type="ChEBI" id="CHEBI:58349"/>
    </ligand>
</feature>
<feature type="binding site" evidence="1">
    <location>
        <position position="54"/>
    </location>
    <ligand>
        <name>NADP(+)</name>
        <dbReference type="ChEBI" id="CHEBI:58349"/>
    </ligand>
</feature>
<feature type="binding site" evidence="1">
    <location>
        <begin position="125"/>
        <end position="127"/>
    </location>
    <ligand>
        <name>FMN</name>
        <dbReference type="ChEBI" id="CHEBI:58210"/>
    </ligand>
</feature>
<feature type="binding site" evidence="1">
    <location>
        <begin position="238"/>
        <end position="239"/>
    </location>
    <ligand>
        <name>FMN</name>
        <dbReference type="ChEBI" id="CHEBI:58210"/>
    </ligand>
</feature>
<feature type="binding site" evidence="1">
    <location>
        <position position="278"/>
    </location>
    <ligand>
        <name>FMN</name>
        <dbReference type="ChEBI" id="CHEBI:58210"/>
    </ligand>
</feature>
<feature type="binding site" evidence="1">
    <location>
        <begin position="293"/>
        <end position="297"/>
    </location>
    <ligand>
        <name>FMN</name>
        <dbReference type="ChEBI" id="CHEBI:58210"/>
    </ligand>
</feature>
<feature type="binding site" evidence="1">
    <location>
        <position position="319"/>
    </location>
    <ligand>
        <name>FMN</name>
        <dbReference type="ChEBI" id="CHEBI:58210"/>
    </ligand>
</feature>
<gene>
    <name evidence="1" type="primary">aroC</name>
    <name type="ordered locus">Lferr_1640</name>
</gene>
<reference key="1">
    <citation type="submission" date="2008-08" db="EMBL/GenBank/DDBJ databases">
        <title>Complete sequence of Acidithiobacillus ferrooxidans ATCC 53993.</title>
        <authorList>
            <person name="Lucas S."/>
            <person name="Copeland A."/>
            <person name="Lapidus A."/>
            <person name="Glavina del Rio T."/>
            <person name="Dalin E."/>
            <person name="Tice H."/>
            <person name="Bruce D."/>
            <person name="Goodwin L."/>
            <person name="Pitluck S."/>
            <person name="Sims D."/>
            <person name="Brettin T."/>
            <person name="Detter J.C."/>
            <person name="Han C."/>
            <person name="Kuske C.R."/>
            <person name="Larimer F."/>
            <person name="Land M."/>
            <person name="Hauser L."/>
            <person name="Kyrpides N."/>
            <person name="Lykidis A."/>
            <person name="Borole A.P."/>
        </authorList>
    </citation>
    <scope>NUCLEOTIDE SEQUENCE [LARGE SCALE GENOMIC DNA]</scope>
    <source>
        <strain>ATCC 53993 / BNL-5-31</strain>
    </source>
</reference>